<accession>Q8MZM3</accession>
<accession>Q7PI01</accession>
<keyword id="KW-0002">3D-structure</keyword>
<keyword id="KW-0186">Copper</keyword>
<keyword id="KW-1015">Disulfide bond</keyword>
<keyword id="KW-0325">Glycoprotein</keyword>
<keyword id="KW-0479">Metal-binding</keyword>
<keyword id="KW-0503">Monooxygenase</keyword>
<keyword id="KW-0560">Oxidoreductase</keyword>
<keyword id="KW-1185">Reference proteome</keyword>
<keyword id="KW-0964">Secreted</keyword>
<keyword id="KW-0865">Zymogen</keyword>
<dbReference type="EC" id="1.10.3.-" evidence="4"/>
<dbReference type="EC" id="1.14.18.-" evidence="4"/>
<dbReference type="EMBL" id="AJ459961">
    <property type="protein sequence ID" value="CAD31060.1"/>
    <property type="molecule type" value="mRNA"/>
</dbReference>
<dbReference type="EMBL" id="AAAB01008948">
    <property type="protein sequence ID" value="EAA44337.1"/>
    <property type="molecule type" value="Genomic_DNA"/>
</dbReference>
<dbReference type="PDB" id="4YZW">
    <property type="method" value="X-ray"/>
    <property type="resolution" value="2.60 A"/>
    <property type="chains" value="A/B=1-700"/>
</dbReference>
<dbReference type="PDBsum" id="4YZW"/>
<dbReference type="SMR" id="Q8MZM3"/>
<dbReference type="STRING" id="7165.Q8MZM3"/>
<dbReference type="GlyCosmos" id="Q8MZM3">
    <property type="glycosylation" value="6 sites, No reported glycans"/>
</dbReference>
<dbReference type="PaxDb" id="7165-AGAP004976-PA"/>
<dbReference type="EnsemblMetazoa" id="AGAP004976-RA">
    <property type="protein sequence ID" value="AGAP004976-PA"/>
    <property type="gene ID" value="AGAP004976"/>
</dbReference>
<dbReference type="GeneID" id="1275798"/>
<dbReference type="KEGG" id="aga:1275798"/>
<dbReference type="VEuPathDB" id="VectorBase:AGAMI1_010507"/>
<dbReference type="VEuPathDB" id="VectorBase:AGAP004976"/>
<dbReference type="eggNOG" id="ENOG502S0I4">
    <property type="taxonomic scope" value="Eukaryota"/>
</dbReference>
<dbReference type="HOGENOM" id="CLU_012213_0_1_1"/>
<dbReference type="InParanoid" id="Q8MZM3"/>
<dbReference type="OMA" id="HNDAHIM"/>
<dbReference type="OrthoDB" id="8119704at2759"/>
<dbReference type="PhylomeDB" id="Q8MZM3"/>
<dbReference type="Proteomes" id="UP000007062">
    <property type="component" value="Chromosome 2L"/>
</dbReference>
<dbReference type="GO" id="GO:0005576">
    <property type="term" value="C:extracellular region"/>
    <property type="evidence" value="ECO:0007669"/>
    <property type="project" value="UniProtKB-SubCell"/>
</dbReference>
<dbReference type="GO" id="GO:0004097">
    <property type="term" value="F:catechol oxidase activity"/>
    <property type="evidence" value="ECO:0000314"/>
    <property type="project" value="UniProtKB"/>
</dbReference>
<dbReference type="GO" id="GO:0046872">
    <property type="term" value="F:metal ion binding"/>
    <property type="evidence" value="ECO:0007669"/>
    <property type="project" value="UniProtKB-KW"/>
</dbReference>
<dbReference type="FunFam" id="2.60.40.1520:FF:000001">
    <property type="entry name" value="Hemocyanin subunit 2"/>
    <property type="match status" value="1"/>
</dbReference>
<dbReference type="Gene3D" id="1.10.1280.10">
    <property type="entry name" value="Di-copper center containing domain from catechol oxidase"/>
    <property type="match status" value="1"/>
</dbReference>
<dbReference type="Gene3D" id="2.60.40.1520">
    <property type="entry name" value="Hemocyanin, C-terminal domain"/>
    <property type="match status" value="1"/>
</dbReference>
<dbReference type="Gene3D" id="1.20.1370.10">
    <property type="entry name" value="Hemocyanin, N-terminal domain"/>
    <property type="match status" value="1"/>
</dbReference>
<dbReference type="InterPro" id="IPR008922">
    <property type="entry name" value="Di-copper_centre_dom_sf"/>
</dbReference>
<dbReference type="InterPro" id="IPR013788">
    <property type="entry name" value="Hemocyanin/hexamerin"/>
</dbReference>
<dbReference type="InterPro" id="IPR000896">
    <property type="entry name" value="Hemocyanin/hexamerin_mid_dom"/>
</dbReference>
<dbReference type="InterPro" id="IPR005203">
    <property type="entry name" value="Hemocyanin_C"/>
</dbReference>
<dbReference type="InterPro" id="IPR037020">
    <property type="entry name" value="Hemocyanin_C_sf"/>
</dbReference>
<dbReference type="InterPro" id="IPR005204">
    <property type="entry name" value="Hemocyanin_N"/>
</dbReference>
<dbReference type="InterPro" id="IPR036697">
    <property type="entry name" value="Hemocyanin_N_sf"/>
</dbReference>
<dbReference type="InterPro" id="IPR014756">
    <property type="entry name" value="Ig_E-set"/>
</dbReference>
<dbReference type="InterPro" id="IPR002227">
    <property type="entry name" value="Tyrosinase_Cu-bd"/>
</dbReference>
<dbReference type="PANTHER" id="PTHR11511:SF24">
    <property type="entry name" value="GH04080P"/>
    <property type="match status" value="1"/>
</dbReference>
<dbReference type="PANTHER" id="PTHR11511">
    <property type="entry name" value="LARVAL STORAGE PROTEIN/PHENOLOXIDASE"/>
    <property type="match status" value="1"/>
</dbReference>
<dbReference type="Pfam" id="PF03723">
    <property type="entry name" value="Hemocyanin_C"/>
    <property type="match status" value="1"/>
</dbReference>
<dbReference type="Pfam" id="PF00372">
    <property type="entry name" value="Hemocyanin_M"/>
    <property type="match status" value="1"/>
</dbReference>
<dbReference type="Pfam" id="PF03722">
    <property type="entry name" value="Hemocyanin_N"/>
    <property type="match status" value="1"/>
</dbReference>
<dbReference type="PRINTS" id="PR00187">
    <property type="entry name" value="HAEMOCYANIN"/>
</dbReference>
<dbReference type="SUPFAM" id="SSF48056">
    <property type="entry name" value="Di-copper centre-containing domain"/>
    <property type="match status" value="1"/>
</dbReference>
<dbReference type="SUPFAM" id="SSF81296">
    <property type="entry name" value="E set domains"/>
    <property type="match status" value="1"/>
</dbReference>
<dbReference type="SUPFAM" id="SSF48050">
    <property type="entry name" value="Hemocyanin, N-terminal domain"/>
    <property type="match status" value="1"/>
</dbReference>
<dbReference type="PROSITE" id="PS00210">
    <property type="entry name" value="HEMOCYANIN_2"/>
    <property type="match status" value="1"/>
</dbReference>
<dbReference type="PROSITE" id="PS00498">
    <property type="entry name" value="TYROSINASE_2"/>
    <property type="match status" value="1"/>
</dbReference>
<proteinExistence type="evidence at protein level"/>
<organism evidence="10">
    <name type="scientific">Anopheles gambiae</name>
    <name type="common">African malaria mosquito</name>
    <dbReference type="NCBI Taxonomy" id="7165"/>
    <lineage>
        <taxon>Eukaryota</taxon>
        <taxon>Metazoa</taxon>
        <taxon>Ecdysozoa</taxon>
        <taxon>Arthropoda</taxon>
        <taxon>Hexapoda</taxon>
        <taxon>Insecta</taxon>
        <taxon>Pterygota</taxon>
        <taxon>Neoptera</taxon>
        <taxon>Endopterygota</taxon>
        <taxon>Diptera</taxon>
        <taxon>Nematocera</taxon>
        <taxon>Culicoidea</taxon>
        <taxon>Culicidae</taxon>
        <taxon>Anophelinae</taxon>
        <taxon>Anopheles</taxon>
    </lineage>
</organism>
<evidence type="ECO:0000250" key="1">
    <source>
        <dbReference type="UniProtKB" id="Q8I6K1"/>
    </source>
</evidence>
<evidence type="ECO:0000250" key="2">
    <source>
        <dbReference type="UniProtKB" id="Q9V521"/>
    </source>
</evidence>
<evidence type="ECO:0000255" key="3">
    <source>
        <dbReference type="PROSITE-ProRule" id="PRU00498"/>
    </source>
</evidence>
<evidence type="ECO:0000269" key="4">
    <source>
    </source>
</evidence>
<evidence type="ECO:0000303" key="5">
    <source>
    </source>
</evidence>
<evidence type="ECO:0000305" key="6"/>
<evidence type="ECO:0000305" key="7">
    <source>
    </source>
</evidence>
<evidence type="ECO:0000312" key="8">
    <source>
        <dbReference type="EMBL" id="CAD31060.1"/>
    </source>
</evidence>
<evidence type="ECO:0000312" key="9">
    <source>
        <dbReference type="EMBL" id="EAA44337.1"/>
    </source>
</evidence>
<evidence type="ECO:0000312" key="10">
    <source>
        <dbReference type="Proteomes" id="UP000007062"/>
    </source>
</evidence>
<evidence type="ECO:0007744" key="11">
    <source>
        <dbReference type="PDB" id="4YZW"/>
    </source>
</evidence>
<evidence type="ECO:0007829" key="12">
    <source>
        <dbReference type="PDB" id="4YZW"/>
    </source>
</evidence>
<gene>
    <name evidence="5" type="primary">PPO8</name>
    <name type="synonym">1275798</name>
    <name evidence="9" type="ORF">AgaP_AGAP004976</name>
</gene>
<reference evidence="8" key="1">
    <citation type="submission" date="2002-05" db="EMBL/GenBank/DDBJ databases">
        <title>The prophenoloxidases of Anopheles gambiae.</title>
        <authorList>
            <person name="Mueller H.M."/>
        </authorList>
    </citation>
    <scope>NUCLEOTIDE SEQUENCE [MRNA]</scope>
</reference>
<reference evidence="10" key="2">
    <citation type="journal article" date="2002" name="Science">
        <title>The genome sequence of the malaria mosquito Anopheles gambiae.</title>
        <authorList>
            <person name="Holt R.A."/>
            <person name="Subramanian G.M."/>
            <person name="Halpern A."/>
            <person name="Sutton G.G."/>
            <person name="Charlab R."/>
            <person name="Nusskern D.R."/>
            <person name="Wincker P."/>
            <person name="Clark A.G."/>
            <person name="Ribeiro J.M.C."/>
            <person name="Wides R."/>
            <person name="Salzberg S.L."/>
            <person name="Loftus B.J."/>
            <person name="Yandell M.D."/>
            <person name="Majoros W.H."/>
            <person name="Rusch D.B."/>
            <person name="Lai Z."/>
            <person name="Kraft C.L."/>
            <person name="Abril J.F."/>
            <person name="Anthouard V."/>
            <person name="Arensburger P."/>
            <person name="Atkinson P.W."/>
            <person name="Baden H."/>
            <person name="de Berardinis V."/>
            <person name="Baldwin D."/>
            <person name="Benes V."/>
            <person name="Biedler J."/>
            <person name="Blass C."/>
            <person name="Bolanos R."/>
            <person name="Boscus D."/>
            <person name="Barnstead M."/>
            <person name="Cai S."/>
            <person name="Center A."/>
            <person name="Chaturverdi K."/>
            <person name="Christophides G.K."/>
            <person name="Chrystal M.A.M."/>
            <person name="Clamp M."/>
            <person name="Cravchik A."/>
            <person name="Curwen V."/>
            <person name="Dana A."/>
            <person name="Delcher A."/>
            <person name="Dew I."/>
            <person name="Evans C.A."/>
            <person name="Flanigan M."/>
            <person name="Grundschober-Freimoser A."/>
            <person name="Friedli L."/>
            <person name="Gu Z."/>
            <person name="Guan P."/>
            <person name="Guigo R."/>
            <person name="Hillenmeyer M.E."/>
            <person name="Hladun S.L."/>
            <person name="Hogan J.R."/>
            <person name="Hong Y.S."/>
            <person name="Hoover J."/>
            <person name="Jaillon O."/>
            <person name="Ke Z."/>
            <person name="Kodira C.D."/>
            <person name="Kokoza E."/>
            <person name="Koutsos A."/>
            <person name="Letunic I."/>
            <person name="Levitsky A.A."/>
            <person name="Liang Y."/>
            <person name="Lin J.-J."/>
            <person name="Lobo N.F."/>
            <person name="Lopez J.R."/>
            <person name="Malek J.A."/>
            <person name="McIntosh T.C."/>
            <person name="Meister S."/>
            <person name="Miller J.R."/>
            <person name="Mobarry C."/>
            <person name="Mongin E."/>
            <person name="Murphy S.D."/>
            <person name="O'Brochta D.A."/>
            <person name="Pfannkoch C."/>
            <person name="Qi R."/>
            <person name="Regier M.A."/>
            <person name="Remington K."/>
            <person name="Shao H."/>
            <person name="Sharakhova M.V."/>
            <person name="Sitter C.D."/>
            <person name="Shetty J."/>
            <person name="Smith T.J."/>
            <person name="Strong R."/>
            <person name="Sun J."/>
            <person name="Thomasova D."/>
            <person name="Ton L.Q."/>
            <person name="Topalis P."/>
            <person name="Tu Z.J."/>
            <person name="Unger M.F."/>
            <person name="Walenz B."/>
            <person name="Wang A.H."/>
            <person name="Wang J."/>
            <person name="Wang M."/>
            <person name="Wang X."/>
            <person name="Woodford K.J."/>
            <person name="Wortman J.R."/>
            <person name="Wu M."/>
            <person name="Yao A."/>
            <person name="Zdobnov E.M."/>
            <person name="Zhang H."/>
            <person name="Zhao Q."/>
            <person name="Zhao S."/>
            <person name="Zhu S.C."/>
            <person name="Zhimulev I."/>
            <person name="Coluzzi M."/>
            <person name="della Torre A."/>
            <person name="Roth C.W."/>
            <person name="Louis C."/>
            <person name="Kalush F."/>
            <person name="Mural R.J."/>
            <person name="Myers E.W."/>
            <person name="Adams M.D."/>
            <person name="Smith H.O."/>
            <person name="Broder S."/>
            <person name="Gardner M.J."/>
            <person name="Fraser C.M."/>
            <person name="Birney E."/>
            <person name="Bork P."/>
            <person name="Brey P.T."/>
            <person name="Venter J.C."/>
            <person name="Weissenbach J."/>
            <person name="Kafatos F.C."/>
            <person name="Collins F.H."/>
            <person name="Hoffman S.L."/>
        </authorList>
    </citation>
    <scope>NUCLEOTIDE SEQUENCE [LARGE SCALE GENOMIC DNA]</scope>
    <source>
        <strain evidence="10">PEST</strain>
    </source>
</reference>
<reference evidence="11" key="3">
    <citation type="journal article" date="2016" name="BMC Biol.">
        <title>The structure of a prophenoloxidase (PPO) from Anopheles gambiae provides new insights into the mechanism of PPO activation.</title>
        <authorList>
            <person name="Hu Y."/>
            <person name="Wang Y."/>
            <person name="Deng J."/>
            <person name="Jiang H."/>
        </authorList>
    </citation>
    <scope>X-RAY CRYSTALLOGRAPHY (2.60 ANGSTROMS) IN COMPLEX WITH COPPER</scope>
    <scope>FUNCTION</scope>
    <scope>CATALYTIC ACTIVITY</scope>
    <scope>SUBUNIT</scope>
    <scope>ACTIVE SITE</scope>
    <scope>DISULFIDE BONDS</scope>
    <scope>MUTAGENESIS OF GLU-364</scope>
</reference>
<sequence length="700" mass="79293">MATLTQKFHGLLQHPLEPLFLPKNDGTLFYDLPERFLTSRYSPIGQNLANRFGPNSPASSQVSNDTGVPPTVVTIKDLDELPDLTFATWIKRRDSFSLFNPEHRKAAGKLTKLFLDQPNADRLVDVAAYARDRLNAPLFQYALSVALLHRPDTKSVSVPSLLHLFPDQFIDPAAQVRMMEEGSIVLDENRMPIPIPMNYTATDAEPEQRMAFFREDIGVNLHHWHWHLVYPASGPPDVVRKDRRGELFYYMHQQLLARYQIDRYAQGLGRIEPLANLREPVREAYYPKLLRTSNNRTFCPRYPGMTISDVARSADRLEVRIADIESWLPRVLEAIDAGFAVSDDGVRVPLDETRGIDVLGNILERSAISINRNLYGDVHNMGHVLLAFIHDPRGTYLESSGVMGGVATAMRDPIFYRWHKFIDNIFLRNKARLAPYTMAELSNSNVTLEALETQLDRAGGAVNSFVTFWQRSQVDLRAGIDFSAAGSAFVSFTHLQCAPFVYRLRINSTARSNRQDTVRIFLLPRQNEQGRPLSFEDRRLLAIELDSFRVNLRPGMNNIVRQSSNSSVTIPFERTFGNVEQANAGNAQSRFCGCGWPAHMLLPKGNANGVEFDLFAMVSRFEDDNANVNYDENAGCDDSYAFCGLRDRVYPSRRAMGFPFDRRASNGVRSVADFVAPYKNMRLATVTLRFMNTIIDRPTN</sequence>
<protein>
    <recommendedName>
        <fullName evidence="5">Phenoloxidase 8</fullName>
        <ecNumber evidence="4">1.10.3.-</ecNumber>
        <ecNumber evidence="4">1.14.18.-</ecNumber>
    </recommendedName>
    <alternativeName>
        <fullName evidence="6">Prophenoloxidase 8</fullName>
    </alternativeName>
</protein>
<feature type="propeptide" id="PRO_0000452495" evidence="1">
    <location>
        <begin position="1"/>
        <end position="51"/>
    </location>
</feature>
<feature type="chain" id="PRO_0000452496" description="Phenoloxidase 8">
    <location>
        <begin position="52"/>
        <end position="700"/>
    </location>
</feature>
<feature type="active site" description="Proton acceptor" evidence="7">
    <location>
        <position position="364"/>
    </location>
</feature>
<feature type="binding site" evidence="4 11">
    <location>
        <position position="223"/>
    </location>
    <ligand>
        <name>Cu cation</name>
        <dbReference type="ChEBI" id="CHEBI:23378"/>
        <label>1</label>
    </ligand>
</feature>
<feature type="binding site" evidence="4 11">
    <location>
        <position position="227"/>
    </location>
    <ligand>
        <name>Cu cation</name>
        <dbReference type="ChEBI" id="CHEBI:23378"/>
        <label>1</label>
    </ligand>
</feature>
<feature type="binding site" evidence="4 11">
    <location>
        <position position="252"/>
    </location>
    <ligand>
        <name>Cu cation</name>
        <dbReference type="ChEBI" id="CHEBI:23378"/>
        <label>1</label>
    </ligand>
</feature>
<feature type="binding site" evidence="4 11">
    <location>
        <position position="379"/>
    </location>
    <ligand>
        <name>Cu cation</name>
        <dbReference type="ChEBI" id="CHEBI:23378"/>
        <label>2</label>
    </ligand>
</feature>
<feature type="binding site" evidence="4 11">
    <location>
        <position position="383"/>
    </location>
    <ligand>
        <name>Cu cation</name>
        <dbReference type="ChEBI" id="CHEBI:23378"/>
        <label>2</label>
    </ligand>
</feature>
<feature type="binding site" evidence="4 11">
    <location>
        <position position="419"/>
    </location>
    <ligand>
        <name>Cu cation</name>
        <dbReference type="ChEBI" id="CHEBI:23378"/>
        <label>2</label>
    </ligand>
</feature>
<feature type="glycosylation site" description="N-linked (GlcNAc...) asparagine" evidence="3">
    <location>
        <position position="64"/>
    </location>
</feature>
<feature type="glycosylation site" description="N-linked (GlcNAc...) asparagine" evidence="3">
    <location>
        <position position="198"/>
    </location>
</feature>
<feature type="glycosylation site" description="N-linked (GlcNAc...) asparagine" evidence="3">
    <location>
        <position position="295"/>
    </location>
</feature>
<feature type="glycosylation site" description="N-linked (GlcNAc...) asparagine" evidence="3">
    <location>
        <position position="445"/>
    </location>
</feature>
<feature type="glycosylation site" description="N-linked (GlcNAc...) asparagine" evidence="3">
    <location>
        <position position="507"/>
    </location>
</feature>
<feature type="glycosylation site" description="N-linked (GlcNAc...) asparagine" evidence="3">
    <location>
        <position position="565"/>
    </location>
</feature>
<feature type="disulfide bond" evidence="4 11">
    <location>
        <begin position="592"/>
        <end position="636"/>
    </location>
</feature>
<feature type="disulfide bond" evidence="4 11">
    <location>
        <begin position="594"/>
        <end position="643"/>
    </location>
</feature>
<feature type="mutagenesis site" description="Severe loss of oxidase and hydroxylase activities." evidence="4">
    <original>E</original>
    <variation>Q</variation>
    <location>
        <position position="364"/>
    </location>
</feature>
<feature type="helix" evidence="12">
    <location>
        <begin position="2"/>
        <end position="9"/>
    </location>
</feature>
<feature type="turn" evidence="12">
    <location>
        <begin position="24"/>
        <end position="27"/>
    </location>
</feature>
<feature type="strand" evidence="12">
    <location>
        <begin position="28"/>
        <end position="31"/>
    </location>
</feature>
<feature type="helix" evidence="12">
    <location>
        <begin position="34"/>
        <end position="36"/>
    </location>
</feature>
<feature type="turn" evidence="12">
    <location>
        <begin position="39"/>
        <end position="41"/>
    </location>
</feature>
<feature type="helix" evidence="12">
    <location>
        <begin position="42"/>
        <end position="44"/>
    </location>
</feature>
<feature type="helix" evidence="12">
    <location>
        <begin position="45"/>
        <end position="52"/>
    </location>
</feature>
<feature type="turn" evidence="12">
    <location>
        <begin position="59"/>
        <end position="63"/>
    </location>
</feature>
<feature type="strand" evidence="12">
    <location>
        <begin position="71"/>
        <end position="74"/>
    </location>
</feature>
<feature type="turn" evidence="12">
    <location>
        <begin position="85"/>
        <end position="89"/>
    </location>
</feature>
<feature type="helix" evidence="12">
    <location>
        <begin position="101"/>
        <end position="115"/>
    </location>
</feature>
<feature type="helix" evidence="12">
    <location>
        <begin position="120"/>
        <end position="131"/>
    </location>
</feature>
<feature type="helix" evidence="12">
    <location>
        <begin position="136"/>
        <end position="149"/>
    </location>
</feature>
<feature type="helix" evidence="12">
    <location>
        <begin position="151"/>
        <end position="153"/>
    </location>
</feature>
<feature type="helix" evidence="12">
    <location>
        <begin position="161"/>
        <end position="163"/>
    </location>
</feature>
<feature type="helix" evidence="12">
    <location>
        <begin position="166"/>
        <end position="168"/>
    </location>
</feature>
<feature type="helix" evidence="12">
    <location>
        <begin position="172"/>
        <end position="184"/>
    </location>
</feature>
<feature type="helix" evidence="12">
    <location>
        <begin position="187"/>
        <end position="189"/>
    </location>
</feature>
<feature type="helix" evidence="12">
    <location>
        <begin position="206"/>
        <end position="210"/>
    </location>
</feature>
<feature type="helix" evidence="12">
    <location>
        <begin position="211"/>
        <end position="214"/>
    </location>
</feature>
<feature type="helix" evidence="12">
    <location>
        <begin position="217"/>
        <end position="229"/>
    </location>
</feature>
<feature type="strand" evidence="12">
    <location>
        <begin position="232"/>
        <end position="235"/>
    </location>
</feature>
<feature type="helix" evidence="12">
    <location>
        <begin position="236"/>
        <end position="239"/>
    </location>
</feature>
<feature type="helix" evidence="12">
    <location>
        <begin position="244"/>
        <end position="265"/>
    </location>
</feature>
<feature type="turn" evidence="12">
    <location>
        <begin position="292"/>
        <end position="294"/>
    </location>
</feature>
<feature type="strand" evidence="12">
    <location>
        <begin position="310"/>
        <end position="312"/>
    </location>
</feature>
<feature type="helix" evidence="12">
    <location>
        <begin position="313"/>
        <end position="315"/>
    </location>
</feature>
<feature type="strand" evidence="12">
    <location>
        <begin position="317"/>
        <end position="319"/>
    </location>
</feature>
<feature type="helix" evidence="12">
    <location>
        <begin position="321"/>
        <end position="337"/>
    </location>
</feature>
<feature type="strand" evidence="12">
    <location>
        <begin position="339"/>
        <end position="341"/>
    </location>
</feature>
<feature type="strand" evidence="12">
    <location>
        <begin position="347"/>
        <end position="349"/>
    </location>
</feature>
<feature type="helix" evidence="12">
    <location>
        <begin position="355"/>
        <end position="364"/>
    </location>
</feature>
<feature type="helix" evidence="12">
    <location>
        <begin position="372"/>
        <end position="375"/>
    </location>
</feature>
<feature type="helix" evidence="12">
    <location>
        <begin position="378"/>
        <end position="387"/>
    </location>
</feature>
<feature type="turn" evidence="12">
    <location>
        <begin position="388"/>
        <end position="390"/>
    </location>
</feature>
<feature type="helix" evidence="12">
    <location>
        <begin position="402"/>
        <end position="404"/>
    </location>
</feature>
<feature type="turn" evidence="12">
    <location>
        <begin position="406"/>
        <end position="408"/>
    </location>
</feature>
<feature type="helix" evidence="12">
    <location>
        <begin position="409"/>
        <end position="411"/>
    </location>
</feature>
<feature type="helix" evidence="12">
    <location>
        <begin position="414"/>
        <end position="430"/>
    </location>
</feature>
<feature type="helix" evidence="12">
    <location>
        <begin position="438"/>
        <end position="441"/>
    </location>
</feature>
<feature type="strand" evidence="12">
    <location>
        <begin position="446"/>
        <end position="457"/>
    </location>
</feature>
<feature type="strand" evidence="12">
    <location>
        <begin position="462"/>
        <end position="475"/>
    </location>
</feature>
<feature type="helix" evidence="12">
    <location>
        <begin position="477"/>
        <end position="479"/>
    </location>
</feature>
<feature type="strand" evidence="12">
    <location>
        <begin position="489"/>
        <end position="497"/>
    </location>
</feature>
<feature type="strand" evidence="12">
    <location>
        <begin position="500"/>
        <end position="508"/>
    </location>
</feature>
<feature type="strand" evidence="12">
    <location>
        <begin position="514"/>
        <end position="524"/>
    </location>
</feature>
<feature type="strand" evidence="12">
    <location>
        <begin position="528"/>
        <end position="530"/>
    </location>
</feature>
<feature type="helix" evidence="12">
    <location>
        <begin position="535"/>
        <end position="540"/>
    </location>
</feature>
<feature type="strand" evidence="12">
    <location>
        <begin position="543"/>
        <end position="552"/>
    </location>
</feature>
<feature type="strand" evidence="12">
    <location>
        <begin position="554"/>
        <end position="562"/>
    </location>
</feature>
<feature type="helix" evidence="12">
    <location>
        <begin position="563"/>
        <end position="565"/>
    </location>
</feature>
<feature type="strand" evidence="12">
    <location>
        <begin position="567"/>
        <end position="570"/>
    </location>
</feature>
<feature type="helix" evidence="12">
    <location>
        <begin position="572"/>
        <end position="576"/>
    </location>
</feature>
<feature type="turn" evidence="12">
    <location>
        <begin position="590"/>
        <end position="593"/>
    </location>
</feature>
<feature type="strand" evidence="12">
    <location>
        <begin position="595"/>
        <end position="597"/>
    </location>
</feature>
<feature type="helix" evidence="12">
    <location>
        <begin position="598"/>
        <end position="600"/>
    </location>
</feature>
<feature type="strand" evidence="12">
    <location>
        <begin position="606"/>
        <end position="608"/>
    </location>
</feature>
<feature type="strand" evidence="12">
    <location>
        <begin position="610"/>
        <end position="619"/>
    </location>
</feature>
<feature type="helix" evidence="12">
    <location>
        <begin position="621"/>
        <end position="624"/>
    </location>
</feature>
<feature type="helix" evidence="12">
    <location>
        <begin position="640"/>
        <end position="643"/>
    </location>
</feature>
<feature type="turn" evidence="12">
    <location>
        <begin position="656"/>
        <end position="659"/>
    </location>
</feature>
<feature type="strand" evidence="12">
    <location>
        <begin position="660"/>
        <end position="662"/>
    </location>
</feature>
<feature type="helix" evidence="12">
    <location>
        <begin position="671"/>
        <end position="675"/>
    </location>
</feature>
<feature type="strand" evidence="12">
    <location>
        <begin position="681"/>
        <end position="696"/>
    </location>
</feature>
<comment type="function">
    <text evidence="4 7">This is a copper-containing oxidase that functions in the formation of pigments such as melanins and other polyphenolic compounds (Probable). Catalyzes the oxidation of o-diphenols such as dopamine (PubMed:26732497). Also oxidizes monophenols such as tyramine (PubMed:26732497).</text>
</comment>
<comment type="catalytic activity">
    <reaction evidence="4">
        <text>2 tyramine + O2 = 2 dopamine</text>
        <dbReference type="Rhea" id="RHEA:66596"/>
        <dbReference type="ChEBI" id="CHEBI:15379"/>
        <dbReference type="ChEBI" id="CHEBI:59905"/>
        <dbReference type="ChEBI" id="CHEBI:327995"/>
    </reaction>
</comment>
<comment type="catalytic activity">
    <reaction evidence="4">
        <text>2 dopamine + O2 = 2 dopamine quinone + 2 H2O</text>
        <dbReference type="Rhea" id="RHEA:66600"/>
        <dbReference type="ChEBI" id="CHEBI:15377"/>
        <dbReference type="ChEBI" id="CHEBI:15379"/>
        <dbReference type="ChEBI" id="CHEBI:59905"/>
        <dbReference type="ChEBI" id="CHEBI:167191"/>
    </reaction>
</comment>
<comment type="cofactor">
    <cofactor evidence="4">
        <name>Cu(2+)</name>
        <dbReference type="ChEBI" id="CHEBI:29036"/>
    </cofactor>
    <text evidence="4">Binds 2 copper ions per subunit.</text>
</comment>
<comment type="subunit">
    <text evidence="4">Homodimer.</text>
</comment>
<comment type="subcellular location">
    <subcellularLocation>
        <location evidence="1">Secreted</location>
    </subcellularLocation>
</comment>
<comment type="PTM">
    <text evidence="2">Upon activation, a trypsin type protease cleaves prophenol oxidase to yield the active enzyme.</text>
</comment>
<comment type="similarity">
    <text evidence="6">Belongs to the tyrosinase family.</text>
</comment>
<name>PPO8_ANOGA</name>